<organism>
    <name type="scientific">Dictyostelium discoideum</name>
    <name type="common">Social amoeba</name>
    <dbReference type="NCBI Taxonomy" id="44689"/>
    <lineage>
        <taxon>Eukaryota</taxon>
        <taxon>Amoebozoa</taxon>
        <taxon>Evosea</taxon>
        <taxon>Eumycetozoa</taxon>
        <taxon>Dictyostelia</taxon>
        <taxon>Dictyosteliales</taxon>
        <taxon>Dictyosteliaceae</taxon>
        <taxon>Dictyostelium</taxon>
    </lineage>
</organism>
<reference key="1">
    <citation type="journal article" date="2005" name="Nature">
        <title>The genome of the social amoeba Dictyostelium discoideum.</title>
        <authorList>
            <person name="Eichinger L."/>
            <person name="Pachebat J.A."/>
            <person name="Gloeckner G."/>
            <person name="Rajandream M.A."/>
            <person name="Sucgang R."/>
            <person name="Berriman M."/>
            <person name="Song J."/>
            <person name="Olsen R."/>
            <person name="Szafranski K."/>
            <person name="Xu Q."/>
            <person name="Tunggal B."/>
            <person name="Kummerfeld S."/>
            <person name="Madera M."/>
            <person name="Konfortov B.A."/>
            <person name="Rivero F."/>
            <person name="Bankier A.T."/>
            <person name="Lehmann R."/>
            <person name="Hamlin N."/>
            <person name="Davies R."/>
            <person name="Gaudet P."/>
            <person name="Fey P."/>
            <person name="Pilcher K."/>
            <person name="Chen G."/>
            <person name="Saunders D."/>
            <person name="Sodergren E.J."/>
            <person name="Davis P."/>
            <person name="Kerhornou A."/>
            <person name="Nie X."/>
            <person name="Hall N."/>
            <person name="Anjard C."/>
            <person name="Hemphill L."/>
            <person name="Bason N."/>
            <person name="Farbrother P."/>
            <person name="Desany B."/>
            <person name="Just E."/>
            <person name="Morio T."/>
            <person name="Rost R."/>
            <person name="Churcher C.M."/>
            <person name="Cooper J."/>
            <person name="Haydock S."/>
            <person name="van Driessche N."/>
            <person name="Cronin A."/>
            <person name="Goodhead I."/>
            <person name="Muzny D.M."/>
            <person name="Mourier T."/>
            <person name="Pain A."/>
            <person name="Lu M."/>
            <person name="Harper D."/>
            <person name="Lindsay R."/>
            <person name="Hauser H."/>
            <person name="James K.D."/>
            <person name="Quiles M."/>
            <person name="Madan Babu M."/>
            <person name="Saito T."/>
            <person name="Buchrieser C."/>
            <person name="Wardroper A."/>
            <person name="Felder M."/>
            <person name="Thangavelu M."/>
            <person name="Johnson D."/>
            <person name="Knights A."/>
            <person name="Loulseged H."/>
            <person name="Mungall K.L."/>
            <person name="Oliver K."/>
            <person name="Price C."/>
            <person name="Quail M.A."/>
            <person name="Urushihara H."/>
            <person name="Hernandez J."/>
            <person name="Rabbinowitsch E."/>
            <person name="Steffen D."/>
            <person name="Sanders M."/>
            <person name="Ma J."/>
            <person name="Kohara Y."/>
            <person name="Sharp S."/>
            <person name="Simmonds M.N."/>
            <person name="Spiegler S."/>
            <person name="Tivey A."/>
            <person name="Sugano S."/>
            <person name="White B."/>
            <person name="Walker D."/>
            <person name="Woodward J.R."/>
            <person name="Winckler T."/>
            <person name="Tanaka Y."/>
            <person name="Shaulsky G."/>
            <person name="Schleicher M."/>
            <person name="Weinstock G.M."/>
            <person name="Rosenthal A."/>
            <person name="Cox E.C."/>
            <person name="Chisholm R.L."/>
            <person name="Gibbs R.A."/>
            <person name="Loomis W.F."/>
            <person name="Platzer M."/>
            <person name="Kay R.R."/>
            <person name="Williams J.G."/>
            <person name="Dear P.H."/>
            <person name="Noegel A.A."/>
            <person name="Barrell B.G."/>
            <person name="Kuspa A."/>
        </authorList>
    </citation>
    <scope>NUCLEOTIDE SEQUENCE [LARGE SCALE GENOMIC DNA]</scope>
    <source>
        <strain>AX4</strain>
    </source>
</reference>
<reference key="2">
    <citation type="journal article" date="2007" name="Bioinformatics">
        <title>Polyketide synthase genes and the natural products potential of Dictyostelium discoideum.</title>
        <authorList>
            <person name="Zucko J."/>
            <person name="Skunca N."/>
            <person name="Curk T."/>
            <person name="Zupan B."/>
            <person name="Long P.F."/>
            <person name="Cullum J."/>
            <person name="Kessin R.H."/>
            <person name="Hranueli D."/>
        </authorList>
    </citation>
    <scope>IDENTIFICATION</scope>
</reference>
<accession>Q54FP8</accession>
<proteinExistence type="inferred from homology"/>
<dbReference type="EC" id="2.3.1.-"/>
<dbReference type="EMBL" id="AAFI02000167">
    <property type="protein sequence ID" value="EAL62089.1"/>
    <property type="molecule type" value="Genomic_DNA"/>
</dbReference>
<dbReference type="RefSeq" id="XP_635593.1">
    <property type="nucleotide sequence ID" value="XM_630501.1"/>
</dbReference>
<dbReference type="SMR" id="Q54FP8"/>
<dbReference type="FunCoup" id="Q54FP8">
    <property type="interactions" value="4"/>
</dbReference>
<dbReference type="STRING" id="44689.Q54FP8"/>
<dbReference type="PaxDb" id="44689-DDB0235258"/>
<dbReference type="EnsemblProtists" id="EAL62089">
    <property type="protein sequence ID" value="EAL62089"/>
    <property type="gene ID" value="DDB_G0290709"/>
</dbReference>
<dbReference type="GeneID" id="8627790"/>
<dbReference type="KEGG" id="ddi:DDB_G0290709"/>
<dbReference type="dictyBase" id="DDB_G0290709">
    <property type="gene designation" value="pks32"/>
</dbReference>
<dbReference type="VEuPathDB" id="AmoebaDB:DDB_G0290709"/>
<dbReference type="eggNOG" id="KOG1178">
    <property type="taxonomic scope" value="Eukaryota"/>
</dbReference>
<dbReference type="eggNOG" id="KOG1202">
    <property type="taxonomic scope" value="Eukaryota"/>
</dbReference>
<dbReference type="HOGENOM" id="CLU_000022_31_5_1"/>
<dbReference type="InParanoid" id="Q54FP8"/>
<dbReference type="OMA" id="TMSDNTV"/>
<dbReference type="PhylomeDB" id="Q54FP8"/>
<dbReference type="PRO" id="PR:Q54FP8"/>
<dbReference type="Proteomes" id="UP000002195">
    <property type="component" value="Chromosome 5"/>
</dbReference>
<dbReference type="GO" id="GO:0004315">
    <property type="term" value="F:3-oxoacyl-[acyl-carrier-protein] synthase activity"/>
    <property type="evidence" value="ECO:0007669"/>
    <property type="project" value="InterPro"/>
</dbReference>
<dbReference type="GO" id="GO:0016491">
    <property type="term" value="F:oxidoreductase activity"/>
    <property type="evidence" value="ECO:0007669"/>
    <property type="project" value="InterPro"/>
</dbReference>
<dbReference type="GO" id="GO:0006633">
    <property type="term" value="P:fatty acid biosynthetic process"/>
    <property type="evidence" value="ECO:0000318"/>
    <property type="project" value="GO_Central"/>
</dbReference>
<dbReference type="CDD" id="cd02440">
    <property type="entry name" value="AdoMet_MTases"/>
    <property type="match status" value="1"/>
</dbReference>
<dbReference type="CDD" id="cd05195">
    <property type="entry name" value="enoyl_red"/>
    <property type="match status" value="1"/>
</dbReference>
<dbReference type="CDD" id="cd08954">
    <property type="entry name" value="KR_1_FAS_SDR_x"/>
    <property type="match status" value="1"/>
</dbReference>
<dbReference type="CDD" id="cd00833">
    <property type="entry name" value="PKS"/>
    <property type="match status" value="1"/>
</dbReference>
<dbReference type="CDD" id="cd05235">
    <property type="entry name" value="SDR_e1"/>
    <property type="match status" value="1"/>
</dbReference>
<dbReference type="FunFam" id="3.10.129.110:FF:000009">
    <property type="entry name" value="Probable polyketide synthase 2"/>
    <property type="match status" value="1"/>
</dbReference>
<dbReference type="FunFam" id="3.40.366.10:FF:000002">
    <property type="entry name" value="Probable polyketide synthase 2"/>
    <property type="match status" value="1"/>
</dbReference>
<dbReference type="FunFam" id="3.40.50.720:FF:000967">
    <property type="entry name" value="Probable polyketide synthase 30"/>
    <property type="match status" value="1"/>
</dbReference>
<dbReference type="FunFam" id="3.40.47.10:FF:000091">
    <property type="entry name" value="Probable polyketide synthase 32"/>
    <property type="match status" value="1"/>
</dbReference>
<dbReference type="FunFam" id="3.40.50.720:FF:001433">
    <property type="entry name" value="Probable polyketide synthase 32"/>
    <property type="match status" value="1"/>
</dbReference>
<dbReference type="FunFam" id="3.40.50.720:FF:000794">
    <property type="entry name" value="Probable polyketide synthase 33"/>
    <property type="match status" value="1"/>
</dbReference>
<dbReference type="Gene3D" id="3.40.47.10">
    <property type="match status" value="1"/>
</dbReference>
<dbReference type="Gene3D" id="1.10.1200.10">
    <property type="entry name" value="ACP-like"/>
    <property type="match status" value="1"/>
</dbReference>
<dbReference type="Gene3D" id="3.40.366.10">
    <property type="entry name" value="Malonyl-Coenzyme A Acyl Carrier Protein, domain 2"/>
    <property type="match status" value="1"/>
</dbReference>
<dbReference type="Gene3D" id="3.90.180.10">
    <property type="entry name" value="Medium-chain alcohol dehydrogenases, catalytic domain"/>
    <property type="match status" value="1"/>
</dbReference>
<dbReference type="Gene3D" id="3.40.50.720">
    <property type="entry name" value="NAD(P)-binding Rossmann-like Domain"/>
    <property type="match status" value="3"/>
</dbReference>
<dbReference type="Gene3D" id="3.10.129.110">
    <property type="entry name" value="Polyketide synthase dehydratase"/>
    <property type="match status" value="1"/>
</dbReference>
<dbReference type="Gene3D" id="3.40.50.150">
    <property type="entry name" value="Vaccinia Virus protein VP39"/>
    <property type="match status" value="1"/>
</dbReference>
<dbReference type="InterPro" id="IPR001227">
    <property type="entry name" value="Ac_transferase_dom_sf"/>
</dbReference>
<dbReference type="InterPro" id="IPR036736">
    <property type="entry name" value="ACP-like_sf"/>
</dbReference>
<dbReference type="InterPro" id="IPR014043">
    <property type="entry name" value="Acyl_transferase_dom"/>
</dbReference>
<dbReference type="InterPro" id="IPR016035">
    <property type="entry name" value="Acyl_Trfase/lysoPLipase"/>
</dbReference>
<dbReference type="InterPro" id="IPR013154">
    <property type="entry name" value="ADH-like_N"/>
</dbReference>
<dbReference type="InterPro" id="IPR013120">
    <property type="entry name" value="Far_NAD-bd"/>
</dbReference>
<dbReference type="InterPro" id="IPR011032">
    <property type="entry name" value="GroES-like_sf"/>
</dbReference>
<dbReference type="InterPro" id="IPR018201">
    <property type="entry name" value="Ketoacyl_synth_AS"/>
</dbReference>
<dbReference type="InterPro" id="IPR014031">
    <property type="entry name" value="Ketoacyl_synth_C"/>
</dbReference>
<dbReference type="InterPro" id="IPR014030">
    <property type="entry name" value="Ketoacyl_synth_N"/>
</dbReference>
<dbReference type="InterPro" id="IPR016036">
    <property type="entry name" value="Malonyl_transacylase_ACP-bd"/>
</dbReference>
<dbReference type="InterPro" id="IPR013217">
    <property type="entry name" value="Methyltransf_12"/>
</dbReference>
<dbReference type="InterPro" id="IPR036291">
    <property type="entry name" value="NAD(P)-bd_dom_sf"/>
</dbReference>
<dbReference type="InterPro" id="IPR032821">
    <property type="entry name" value="PKS_assoc"/>
</dbReference>
<dbReference type="InterPro" id="IPR020841">
    <property type="entry name" value="PKS_Beta-ketoAc_synthase_dom"/>
</dbReference>
<dbReference type="InterPro" id="IPR042104">
    <property type="entry name" value="PKS_dehydratase_sf"/>
</dbReference>
<dbReference type="InterPro" id="IPR020843">
    <property type="entry name" value="PKS_ER"/>
</dbReference>
<dbReference type="InterPro" id="IPR013968">
    <property type="entry name" value="PKS_KR"/>
</dbReference>
<dbReference type="InterPro" id="IPR049900">
    <property type="entry name" value="PKS_mFAS_DH"/>
</dbReference>
<dbReference type="InterPro" id="IPR050444">
    <property type="entry name" value="Polyketide_Synthase"/>
</dbReference>
<dbReference type="InterPro" id="IPR009081">
    <property type="entry name" value="PP-bd_ACP"/>
</dbReference>
<dbReference type="InterPro" id="IPR029063">
    <property type="entry name" value="SAM-dependent_MTases_sf"/>
</dbReference>
<dbReference type="InterPro" id="IPR010080">
    <property type="entry name" value="Thioester_reductase-like_dom"/>
</dbReference>
<dbReference type="InterPro" id="IPR016039">
    <property type="entry name" value="Thiolase-like"/>
</dbReference>
<dbReference type="PANTHER" id="PTHR45681:SF5">
    <property type="entry name" value="POLYKETIDE SYNTHASE 27-RELATED"/>
    <property type="match status" value="1"/>
</dbReference>
<dbReference type="PANTHER" id="PTHR45681">
    <property type="entry name" value="POLYKETIDE SYNTHASE 44-RELATED"/>
    <property type="match status" value="1"/>
</dbReference>
<dbReference type="Pfam" id="PF23297">
    <property type="entry name" value="ACP_SdgA_C"/>
    <property type="match status" value="1"/>
</dbReference>
<dbReference type="Pfam" id="PF00698">
    <property type="entry name" value="Acyl_transf_1"/>
    <property type="match status" value="1"/>
</dbReference>
<dbReference type="Pfam" id="PF08240">
    <property type="entry name" value="ADH_N"/>
    <property type="match status" value="1"/>
</dbReference>
<dbReference type="Pfam" id="PF13602">
    <property type="entry name" value="ADH_zinc_N_2"/>
    <property type="match status" value="1"/>
</dbReference>
<dbReference type="Pfam" id="PF16197">
    <property type="entry name" value="KAsynt_C_assoc"/>
    <property type="match status" value="1"/>
</dbReference>
<dbReference type="Pfam" id="PF00109">
    <property type="entry name" value="ketoacyl-synt"/>
    <property type="match status" value="1"/>
</dbReference>
<dbReference type="Pfam" id="PF02801">
    <property type="entry name" value="Ketoacyl-synt_C"/>
    <property type="match status" value="1"/>
</dbReference>
<dbReference type="Pfam" id="PF08659">
    <property type="entry name" value="KR"/>
    <property type="match status" value="1"/>
</dbReference>
<dbReference type="Pfam" id="PF08242">
    <property type="entry name" value="Methyltransf_12"/>
    <property type="match status" value="1"/>
</dbReference>
<dbReference type="Pfam" id="PF07993">
    <property type="entry name" value="NAD_binding_4"/>
    <property type="match status" value="1"/>
</dbReference>
<dbReference type="SMART" id="SM00827">
    <property type="entry name" value="PKS_AT"/>
    <property type="match status" value="1"/>
</dbReference>
<dbReference type="SMART" id="SM00829">
    <property type="entry name" value="PKS_ER"/>
    <property type="match status" value="1"/>
</dbReference>
<dbReference type="SMART" id="SM00822">
    <property type="entry name" value="PKS_KR"/>
    <property type="match status" value="1"/>
</dbReference>
<dbReference type="SMART" id="SM00825">
    <property type="entry name" value="PKS_KS"/>
    <property type="match status" value="1"/>
</dbReference>
<dbReference type="SUPFAM" id="SSF47336">
    <property type="entry name" value="ACP-like"/>
    <property type="match status" value="1"/>
</dbReference>
<dbReference type="SUPFAM" id="SSF52151">
    <property type="entry name" value="FabD/lysophospholipase-like"/>
    <property type="match status" value="1"/>
</dbReference>
<dbReference type="SUPFAM" id="SSF50129">
    <property type="entry name" value="GroES-like"/>
    <property type="match status" value="1"/>
</dbReference>
<dbReference type="SUPFAM" id="SSF51735">
    <property type="entry name" value="NAD(P)-binding Rossmann-fold domains"/>
    <property type="match status" value="3"/>
</dbReference>
<dbReference type="SUPFAM" id="SSF55048">
    <property type="entry name" value="Probable ACP-binding domain of malonyl-CoA ACP transacylase"/>
    <property type="match status" value="1"/>
</dbReference>
<dbReference type="SUPFAM" id="SSF53335">
    <property type="entry name" value="S-adenosyl-L-methionine-dependent methyltransferases"/>
    <property type="match status" value="1"/>
</dbReference>
<dbReference type="SUPFAM" id="SSF53901">
    <property type="entry name" value="Thiolase-like"/>
    <property type="match status" value="1"/>
</dbReference>
<dbReference type="PROSITE" id="PS50075">
    <property type="entry name" value="CARRIER"/>
    <property type="match status" value="1"/>
</dbReference>
<dbReference type="PROSITE" id="PS00606">
    <property type="entry name" value="KS3_1"/>
    <property type="match status" value="1"/>
</dbReference>
<dbReference type="PROSITE" id="PS52004">
    <property type="entry name" value="KS3_2"/>
    <property type="match status" value="1"/>
</dbReference>
<dbReference type="PROSITE" id="PS52019">
    <property type="entry name" value="PKS_MFAS_DH"/>
    <property type="match status" value="1"/>
</dbReference>
<gene>
    <name type="primary">pks32</name>
    <name type="ORF">DDB_G0290709</name>
</gene>
<comment type="function">
    <text evidence="1">Probable polyketide synthase.</text>
</comment>
<comment type="cofactor">
    <cofactor evidence="1">
        <name>pantetheine 4'-phosphate</name>
        <dbReference type="ChEBI" id="CHEBI:47942"/>
    </cofactor>
    <text evidence="1">Binds 1 phosphopantetheine covalently.</text>
</comment>
<comment type="domain">
    <text evidence="1">Modular protein that is responsible for the completion of one condensation-processing cycle. The beta-ketoacyl synthase region is responsible for the actual condensation reaction while the acyl/malonyl transferase region is responsible for incorporating carboxylic acids units onto an acyl carrier protein (ACP) domain (By similarity).</text>
</comment>
<comment type="miscellaneous">
    <text>Encoded by one of the numerous copies of polyketide synthase genes and clustered as a quartet pks29/pks30/pks31/pks32 in chromosome 5.</text>
</comment>
<keyword id="KW-0596">Phosphopantetheine</keyword>
<keyword id="KW-0597">Phosphoprotein</keyword>
<keyword id="KW-1185">Reference proteome</keyword>
<keyword id="KW-0808">Transferase</keyword>
<name>PKS32_DICDI</name>
<sequence length="3101" mass="353160">MVQNTDNNTYDQLIRERNDYDDDAGSSGDVAVIGIGLRFPSGSLKESISKPYQLFNELLNGLDGIVSTFERWFDNYYLNGEIVSKFAGLLPLDEWKQFDPIFFAINPSNDNVSSIDPQQRLLLKCVWEALEDSGIDPISLRGTNTSTFIGSSTIDYCNLQKSPSETQNNIFGSSTHSIANRIGFCFDFRGESLTIDTACSSSSNAINCGYNSIKSNKSNVSIVGGVNFILDPHISKSFTQLGLLSPTGRCHTFSSDADGYVRSEGVGIVVLKKLKDAIKDSNNIYCVIKGSNSNIDGNFDKLNFYSPSKSSQCENIKLAIKSTNGQINESDIDYCETHGTGTPTGDPIELEGISRVFNTTKISSATTITTNNNNKQVLVGSIKSNIGHTEACSGVASLIKCCLMFKNKLFLQNINFKEPNPLINFKEWGLKVVTEPIKFNENKQTVMLINNFGVTGSNVCLILSEFKNNHYGNDYHKMKIDNKFNEKKRYLIPFSSNSSTSLNNYKSSIIKHSNSSSTTTSFKEFVHNQIKFKSTSLIQKSVIIASDWNEFQDESNQIKLNSSDNLISNITVEKKKSPLTVMVLCGQGSQYNKMALSLYDNEPIFRESVNRFDKELFKYYGYSVLDKLRSIDDKDLISIHQPILAQPANIMIQVSLYELYKHWGVSADIIIGHSLGEVSSAYCSGMIDFETLCYLTYHRSVAQNRTTGTGRMLSVNISSDEFINNYQSTTKYESLEIACYNSPTSIVIAGKEDLLNEITNEFKSNDIFCSMLGSLSSFHTSSQQMIKDEVCSLNISSKQPSIAVFSTVTTNLFNHQTSPFNANYVFDNIIQPVYFTQTITNLYKHIESNDMGNEITFIEVSPHPTLQYYLNQMKSTQSSYFNNGKNITIYSPLNKKKNDYNEFLKTISLLYVNNNFDINFKSQLINNNNSNNNYENQLNNLPLYQWDDKEYFKLNSSLEKIKSEGPSINNLGNNTDSPYPSYQTFIDIKKSPFQWLKGHQVSDKFYYPGMGYVHNLLSIYPNQDITISSLEFKSPLVLTEGNNQCLQTIITPLSKNEFNIKSHYKDQKTNQWILSSLGNFSLTKHNSIISNKLINIQSLKDKCNFTSISKQDLYETIRIKTNLTYKGLFQGVKQCHIGNNCSLAIVSLNEIYNQKEYNHLINNTNMNSFFNAAILDTCLHGSLVAVTQPVVLDRIEGFKYYSSNIPSFKNGNNNDDDEESNNNNNNNNNNNNNNNNNIKELYVFSDIKSRTNSQTYSISVKIILPNGTLLVDISNVVCTLVSLPNPESAIICKPPSNDIYTPYLQSKDSVINKPEQFKHLYRVDEFSVNEEDNQFISNELLLSLFYKHINNRCPSINLESLTTLEYNQFKQLYYNSSVNENLFKFIFENLKRYSNILNHDNNHSNIKSENEELYIRTTKIMAKQLFPLKDDDSITDTPQSLFESGFLDDFYKNSRVVQPLNNLLSEIIVETLKPILNEPIVFRILEAGGGTGSLSLLILEKICKLLNDNSTTSIINIEFTWSDISASFFAEIKEKFSSFTNHNNLNIIYRVLDLEKPLLDQDLKASYYDFVVMSNVMHVVKKLKPTLNEIHNILTPNGQLMFIEPPYKSFYYDSIFGCFSQWWPSYDSDIELRPDRCCMKQEKWINLLNQCNYRDTIMSGNDNLVFLIQTRKPTINEIISEQSISLDQLNSFNNIILFSNNNNSNDKNRNSCSSSILDLIRLNQELKHKIININNYNEFQSWITNNQNKDGCNKTLIIFLKSIESKMNTFNFKEITFEYIQINQLILKLELSNNFKHLLLSLNSTTDNYLSSSIVGAARYFVEFPQLDLYILNYDNVSIENNQQLSLINYLINPNNNIQKEFTINNNKVYYERYCRRSNNIKSIFQSESFETNKDNLYIQLNSNLEYQLYSKKDELNSNEVEIEIKANGINYKDYLMYIGMIGSDLDIKYGKEYEIENGIGIDNPNIGNDFSGIITRLGSNVKKFKVGDQVCGVGSKTNSSHVIVDYNYIYYKPLNYNHSVSASIPSIYITSLHSIYSIGNLKSNESILIHSAAGGIGISSLDLLKSKQHQGYIFLTVGSKDKEEYLTKKYGSLITAIYSSRNKDYVYEIKNKLIELSVVEQHQQGVDLILNTLSSEYMDSNFQCLNLSGRIVDLSITHLTPNDYMINNHYKFNMGYNNVEVVDFPSKLFKGYLKKIIKMANSNKLELSVPIIEYSNNQFKDAIEYINQRKHIGKIIVNHNQDEFNRVYNNYQNNNNHIIMKHSYDISKLNIGKNILLTGQTGIVLEILKYLIKYSNHSIENIIILSKSKLKWELELLINQSKFKKDNNIKFHFNQIDIEDSNKVNQVLNQLELNENITNIDSIIHFAFMNDIGDVQQVDMNRLNNTHGAKTIGAINLHNQSINRSWNIKQFIMASSVVSIFGSDQQCCYVSACSVIDSLSKYRHSIGLPSLAINLGAISSTGFVSRNNAIETMLKSSILNLFSPQLVISSLDLFIQNQHQYPNYCLSDFNFEILPSTLTNHFLKKFDYQINIVKKSNQIKSSSGGNGGDNNEIIRSTILNKISELLSIDESKINEDLQLTQYGMDSLVIVQLKNFIDNQLGHNIITIQQLQNNKINQSIEIIKSANNKNNKNNNNNNNNKTNKNNNNLVKKEQQSLDEFIKHETKLNESIISRPYSIKNILNNNNNKSIFLTGSTGFLGAYLLTELIKMKNVSKIYCLIRNNSKLTNPIDAIINNLKKHQLINMNKESPNQRSSKILNHTGNISNDKLSIIENSENNNKQIREDQLIKIIPMIGDISKDKFGLTEQDYLKLSNECDIIINSAADLNLKSNYEESKTVNVDSINQVIKLSVSNNSSQKLIVHFSSIAVFINHQLKDGETFEETNILPNFDTTPVGYIQSKVISEKLLTNAAESRGIPSIIIRPPDIFSNPITGIGHSNDFISLFLKVSKEIGYYPNIHKPIFTTPVTTIAKTTIDLIFNENSWNQNKSKPISIYSLNGNSIEMKSIYEFLENKFNCKEIDYQEWIKLVSKSNGKSSKRYSAFHIHDNQNLLISNFKINSLFKMSNSTKELLISIGSYNHQDWEINESIILNNINNNNKEIK</sequence>
<protein>
    <recommendedName>
        <fullName>Probable polyketide synthase 32</fullName>
        <shortName>dipks32</shortName>
        <ecNumber>2.3.1.-</ecNumber>
    </recommendedName>
</protein>
<feature type="chain" id="PRO_0000371392" description="Probable polyketide synthase 32">
    <location>
        <begin position="1"/>
        <end position="3101"/>
    </location>
</feature>
<feature type="domain" description="Ketosynthase family 3 (KS3)" evidence="3">
    <location>
        <begin position="27"/>
        <end position="465"/>
    </location>
</feature>
<feature type="domain" description="PKS/mFAS DH" evidence="4">
    <location>
        <begin position="965"/>
        <end position="1287"/>
    </location>
</feature>
<feature type="domain" description="Carrier" evidence="2">
    <location>
        <begin position="2550"/>
        <end position="2627"/>
    </location>
</feature>
<feature type="region of interest" description="Acyl/malonyl transferase">
    <location>
        <begin position="664"/>
        <end position="697"/>
    </location>
</feature>
<feature type="region of interest" description="N-terminal hotdog fold" evidence="4">
    <location>
        <begin position="965"/>
        <end position="1087"/>
    </location>
</feature>
<feature type="region of interest" description="C-terminal hotdog fold" evidence="4">
    <location>
        <begin position="1104"/>
        <end position="1287"/>
    </location>
</feature>
<feature type="region of interest" description="Disordered" evidence="6">
    <location>
        <begin position="1209"/>
        <end position="1236"/>
    </location>
</feature>
<feature type="region of interest" description="Disordered" evidence="6">
    <location>
        <begin position="2627"/>
        <end position="2648"/>
    </location>
</feature>
<feature type="compositionally biased region" description="Low complexity" evidence="6">
    <location>
        <begin position="1221"/>
        <end position="1236"/>
    </location>
</feature>
<feature type="active site" description="For beta-ketoacyl synthase activity" evidence="3">
    <location>
        <position position="199"/>
    </location>
</feature>
<feature type="active site" description="For beta-ketoacyl synthase activity" evidence="3">
    <location>
        <position position="338"/>
    </location>
</feature>
<feature type="active site" description="For beta-ketoacyl synthase activity" evidence="3">
    <location>
        <position position="388"/>
    </location>
</feature>
<feature type="active site" description="For acyl/malonyl transferase activity" evidence="5">
    <location>
        <position position="674"/>
    </location>
</feature>
<feature type="active site" description="Proton acceptor; for dehydratase activity" evidence="4">
    <location>
        <position position="999"/>
    </location>
</feature>
<feature type="active site" description="Proton donor; for dehydratase activity" evidence="4">
    <location>
        <position position="1176"/>
    </location>
</feature>
<feature type="modified residue" description="O-(pantetheine 4'-phosphoryl)serine" evidence="2">
    <location>
        <position position="2587"/>
    </location>
</feature>
<evidence type="ECO:0000250" key="1"/>
<evidence type="ECO:0000255" key="2">
    <source>
        <dbReference type="PROSITE-ProRule" id="PRU00258"/>
    </source>
</evidence>
<evidence type="ECO:0000255" key="3">
    <source>
        <dbReference type="PROSITE-ProRule" id="PRU01348"/>
    </source>
</evidence>
<evidence type="ECO:0000255" key="4">
    <source>
        <dbReference type="PROSITE-ProRule" id="PRU01363"/>
    </source>
</evidence>
<evidence type="ECO:0000255" key="5">
    <source>
        <dbReference type="PROSITE-ProRule" id="PRU10022"/>
    </source>
</evidence>
<evidence type="ECO:0000256" key="6">
    <source>
        <dbReference type="SAM" id="MobiDB-lite"/>
    </source>
</evidence>